<accession>Q21V06</accession>
<feature type="chain" id="PRO_1000001948" description="Glutamate--tRNA ligase">
    <location>
        <begin position="1"/>
        <end position="462"/>
    </location>
</feature>
<feature type="short sequence motif" description="'HIGH' region" evidence="1">
    <location>
        <begin position="11"/>
        <end position="21"/>
    </location>
</feature>
<feature type="short sequence motif" description="'KMSKS' region" evidence="1">
    <location>
        <begin position="243"/>
        <end position="247"/>
    </location>
</feature>
<feature type="binding site" evidence="1">
    <location>
        <position position="246"/>
    </location>
    <ligand>
        <name>ATP</name>
        <dbReference type="ChEBI" id="CHEBI:30616"/>
    </ligand>
</feature>
<sequence>MTQKTRTRFAPSPTGFIHLGNIRSALYPWAFARSTGGDFILRIEDTDLDRSTQAAVDVIIESMSWLGLDYDEGPFYQMQRMDRYKTVLAELQAAGHVYPCYMSVAELDALRDAQMAAKEKPRYDGTWRPAPGKTLPPIPEGVKPVLRFKNPLGGSVVWDDKVKGRIEISNDELDDLVIARPDGTPTYNFCVVVDDLDMAITHVIRGDDHVNNTPRQINIFKALGQEPPVYAHLPTVLNEQGEKMSKRNGAKPVTQYRDEGYLPDAMVNYLARLGWSHGDDEIFSRAQFLQWFNLDHLGRSAAQFDEAKLRWVNAQHLKIMSDDALAPLVQAQLQKRGIQADERLPRICALFKDRCDTTVVLADWAAAFYADITLNPAEVSQHVTDAIKPALNLLSEKLASCSWDKLSIAAAIKEVLVACAIKMPLLAMPVRVLVMGSAHTPSLDAVLELCEREKVLTRLRSE</sequence>
<proteinExistence type="inferred from homology"/>
<dbReference type="EC" id="6.1.1.17" evidence="1"/>
<dbReference type="EMBL" id="CP000267">
    <property type="protein sequence ID" value="ABD70397.1"/>
    <property type="molecule type" value="Genomic_DNA"/>
</dbReference>
<dbReference type="RefSeq" id="WP_011464963.1">
    <property type="nucleotide sequence ID" value="NC_007908.1"/>
</dbReference>
<dbReference type="SMR" id="Q21V06"/>
<dbReference type="STRING" id="338969.Rfer_2681"/>
<dbReference type="KEGG" id="rfr:Rfer_2681"/>
<dbReference type="eggNOG" id="COG0008">
    <property type="taxonomic scope" value="Bacteria"/>
</dbReference>
<dbReference type="HOGENOM" id="CLU_015768_6_3_4"/>
<dbReference type="OrthoDB" id="9807503at2"/>
<dbReference type="Proteomes" id="UP000008332">
    <property type="component" value="Chromosome"/>
</dbReference>
<dbReference type="GO" id="GO:0005829">
    <property type="term" value="C:cytosol"/>
    <property type="evidence" value="ECO:0007669"/>
    <property type="project" value="TreeGrafter"/>
</dbReference>
<dbReference type="GO" id="GO:0005524">
    <property type="term" value="F:ATP binding"/>
    <property type="evidence" value="ECO:0007669"/>
    <property type="project" value="UniProtKB-UniRule"/>
</dbReference>
<dbReference type="GO" id="GO:0004818">
    <property type="term" value="F:glutamate-tRNA ligase activity"/>
    <property type="evidence" value="ECO:0007669"/>
    <property type="project" value="UniProtKB-UniRule"/>
</dbReference>
<dbReference type="GO" id="GO:0000049">
    <property type="term" value="F:tRNA binding"/>
    <property type="evidence" value="ECO:0007669"/>
    <property type="project" value="InterPro"/>
</dbReference>
<dbReference type="GO" id="GO:0008270">
    <property type="term" value="F:zinc ion binding"/>
    <property type="evidence" value="ECO:0007669"/>
    <property type="project" value="InterPro"/>
</dbReference>
<dbReference type="GO" id="GO:0006424">
    <property type="term" value="P:glutamyl-tRNA aminoacylation"/>
    <property type="evidence" value="ECO:0007669"/>
    <property type="project" value="UniProtKB-UniRule"/>
</dbReference>
<dbReference type="CDD" id="cd00808">
    <property type="entry name" value="GluRS_core"/>
    <property type="match status" value="1"/>
</dbReference>
<dbReference type="FunFam" id="3.40.50.620:FF:000007">
    <property type="entry name" value="Glutamate--tRNA ligase"/>
    <property type="match status" value="1"/>
</dbReference>
<dbReference type="Gene3D" id="1.10.10.350">
    <property type="match status" value="1"/>
</dbReference>
<dbReference type="Gene3D" id="3.40.50.620">
    <property type="entry name" value="HUPs"/>
    <property type="match status" value="1"/>
</dbReference>
<dbReference type="HAMAP" id="MF_00022">
    <property type="entry name" value="Glu_tRNA_synth_type1"/>
    <property type="match status" value="1"/>
</dbReference>
<dbReference type="InterPro" id="IPR045462">
    <property type="entry name" value="aa-tRNA-synth_I_cd-bd"/>
</dbReference>
<dbReference type="InterPro" id="IPR020751">
    <property type="entry name" value="aa-tRNA-synth_I_codon-bd_sub2"/>
</dbReference>
<dbReference type="InterPro" id="IPR001412">
    <property type="entry name" value="aa-tRNA-synth_I_CS"/>
</dbReference>
<dbReference type="InterPro" id="IPR008925">
    <property type="entry name" value="aa_tRNA-synth_I_cd-bd_sf"/>
</dbReference>
<dbReference type="InterPro" id="IPR004527">
    <property type="entry name" value="Glu-tRNA-ligase_bac/mito"/>
</dbReference>
<dbReference type="InterPro" id="IPR000924">
    <property type="entry name" value="Glu/Gln-tRNA-synth"/>
</dbReference>
<dbReference type="InterPro" id="IPR020058">
    <property type="entry name" value="Glu/Gln-tRNA-synth_Ib_cat-dom"/>
</dbReference>
<dbReference type="InterPro" id="IPR049940">
    <property type="entry name" value="GluQ/Sye"/>
</dbReference>
<dbReference type="InterPro" id="IPR033910">
    <property type="entry name" value="GluRS_core"/>
</dbReference>
<dbReference type="InterPro" id="IPR014729">
    <property type="entry name" value="Rossmann-like_a/b/a_fold"/>
</dbReference>
<dbReference type="NCBIfam" id="TIGR00464">
    <property type="entry name" value="gltX_bact"/>
    <property type="match status" value="1"/>
</dbReference>
<dbReference type="PANTHER" id="PTHR43311">
    <property type="entry name" value="GLUTAMATE--TRNA LIGASE"/>
    <property type="match status" value="1"/>
</dbReference>
<dbReference type="PANTHER" id="PTHR43311:SF2">
    <property type="entry name" value="GLUTAMATE--TRNA LIGASE, MITOCHONDRIAL-RELATED"/>
    <property type="match status" value="1"/>
</dbReference>
<dbReference type="Pfam" id="PF19269">
    <property type="entry name" value="Anticodon_2"/>
    <property type="match status" value="1"/>
</dbReference>
<dbReference type="Pfam" id="PF00749">
    <property type="entry name" value="tRNA-synt_1c"/>
    <property type="match status" value="1"/>
</dbReference>
<dbReference type="PRINTS" id="PR00987">
    <property type="entry name" value="TRNASYNTHGLU"/>
</dbReference>
<dbReference type="SUPFAM" id="SSF48163">
    <property type="entry name" value="An anticodon-binding domain of class I aminoacyl-tRNA synthetases"/>
    <property type="match status" value="1"/>
</dbReference>
<dbReference type="SUPFAM" id="SSF52374">
    <property type="entry name" value="Nucleotidylyl transferase"/>
    <property type="match status" value="1"/>
</dbReference>
<dbReference type="PROSITE" id="PS00178">
    <property type="entry name" value="AA_TRNA_LIGASE_I"/>
    <property type="match status" value="1"/>
</dbReference>
<name>SYE_ALBFT</name>
<reference key="1">
    <citation type="submission" date="2006-02" db="EMBL/GenBank/DDBJ databases">
        <title>Complete sequence of chromosome of Rhodoferax ferrireducens DSM 15236.</title>
        <authorList>
            <person name="Copeland A."/>
            <person name="Lucas S."/>
            <person name="Lapidus A."/>
            <person name="Barry K."/>
            <person name="Detter J.C."/>
            <person name="Glavina del Rio T."/>
            <person name="Hammon N."/>
            <person name="Israni S."/>
            <person name="Pitluck S."/>
            <person name="Brettin T."/>
            <person name="Bruce D."/>
            <person name="Han C."/>
            <person name="Tapia R."/>
            <person name="Gilna P."/>
            <person name="Kiss H."/>
            <person name="Schmutz J."/>
            <person name="Larimer F."/>
            <person name="Land M."/>
            <person name="Kyrpides N."/>
            <person name="Ivanova N."/>
            <person name="Richardson P."/>
        </authorList>
    </citation>
    <scope>NUCLEOTIDE SEQUENCE [LARGE SCALE GENOMIC DNA]</scope>
    <source>
        <strain>ATCC BAA-621 / DSM 15236 / T118</strain>
    </source>
</reference>
<evidence type="ECO:0000255" key="1">
    <source>
        <dbReference type="HAMAP-Rule" id="MF_00022"/>
    </source>
</evidence>
<organism>
    <name type="scientific">Albidiferax ferrireducens (strain ATCC BAA-621 / DSM 15236 / T118)</name>
    <name type="common">Rhodoferax ferrireducens</name>
    <dbReference type="NCBI Taxonomy" id="338969"/>
    <lineage>
        <taxon>Bacteria</taxon>
        <taxon>Pseudomonadati</taxon>
        <taxon>Pseudomonadota</taxon>
        <taxon>Betaproteobacteria</taxon>
        <taxon>Burkholderiales</taxon>
        <taxon>Comamonadaceae</taxon>
        <taxon>Rhodoferax</taxon>
    </lineage>
</organism>
<keyword id="KW-0030">Aminoacyl-tRNA synthetase</keyword>
<keyword id="KW-0067">ATP-binding</keyword>
<keyword id="KW-0963">Cytoplasm</keyword>
<keyword id="KW-0436">Ligase</keyword>
<keyword id="KW-0547">Nucleotide-binding</keyword>
<keyword id="KW-0648">Protein biosynthesis</keyword>
<keyword id="KW-1185">Reference proteome</keyword>
<protein>
    <recommendedName>
        <fullName evidence="1">Glutamate--tRNA ligase</fullName>
        <ecNumber evidence="1">6.1.1.17</ecNumber>
    </recommendedName>
    <alternativeName>
        <fullName evidence="1">Glutamyl-tRNA synthetase</fullName>
        <shortName evidence="1">GluRS</shortName>
    </alternativeName>
</protein>
<comment type="function">
    <text evidence="1">Catalyzes the attachment of glutamate to tRNA(Glu) in a two-step reaction: glutamate is first activated by ATP to form Glu-AMP and then transferred to the acceptor end of tRNA(Glu).</text>
</comment>
<comment type="catalytic activity">
    <reaction evidence="1">
        <text>tRNA(Glu) + L-glutamate + ATP = L-glutamyl-tRNA(Glu) + AMP + diphosphate</text>
        <dbReference type="Rhea" id="RHEA:23540"/>
        <dbReference type="Rhea" id="RHEA-COMP:9663"/>
        <dbReference type="Rhea" id="RHEA-COMP:9680"/>
        <dbReference type="ChEBI" id="CHEBI:29985"/>
        <dbReference type="ChEBI" id="CHEBI:30616"/>
        <dbReference type="ChEBI" id="CHEBI:33019"/>
        <dbReference type="ChEBI" id="CHEBI:78442"/>
        <dbReference type="ChEBI" id="CHEBI:78520"/>
        <dbReference type="ChEBI" id="CHEBI:456215"/>
        <dbReference type="EC" id="6.1.1.17"/>
    </reaction>
</comment>
<comment type="subunit">
    <text evidence="1">Monomer.</text>
</comment>
<comment type="subcellular location">
    <subcellularLocation>
        <location evidence="1">Cytoplasm</location>
    </subcellularLocation>
</comment>
<comment type="similarity">
    <text evidence="1">Belongs to the class-I aminoacyl-tRNA synthetase family. Glutamate--tRNA ligase type 1 subfamily.</text>
</comment>
<gene>
    <name evidence="1" type="primary">gltX</name>
    <name type="ordered locus">Rfer_2681</name>
</gene>